<feature type="chain" id="PRO_0000059656" description="UDP-3-O-acylglucosamine N-acyltransferase">
    <location>
        <begin position="1"/>
        <end position="361"/>
    </location>
</feature>
<feature type="active site" description="Proton acceptor" evidence="1">
    <location>
        <position position="253"/>
    </location>
</feature>
<comment type="function">
    <text evidence="1">Catalyzes the N-acylation of UDP-3-O-acylglucosamine using 3-hydroxyacyl-ACP as the acyl donor. Is involved in the biosynthesis of lipid A, a phosphorylated glycolipid that anchors the lipopolysaccharide to the outer membrane of the cell.</text>
</comment>
<comment type="catalytic activity">
    <reaction evidence="1">
        <text>a UDP-3-O-[(3R)-3-hydroxyacyl]-alpha-D-glucosamine + a (3R)-hydroxyacyl-[ACP] = a UDP-2-N,3-O-bis[(3R)-3-hydroxyacyl]-alpha-D-glucosamine + holo-[ACP] + H(+)</text>
        <dbReference type="Rhea" id="RHEA:53836"/>
        <dbReference type="Rhea" id="RHEA-COMP:9685"/>
        <dbReference type="Rhea" id="RHEA-COMP:9945"/>
        <dbReference type="ChEBI" id="CHEBI:15378"/>
        <dbReference type="ChEBI" id="CHEBI:64479"/>
        <dbReference type="ChEBI" id="CHEBI:78827"/>
        <dbReference type="ChEBI" id="CHEBI:137740"/>
        <dbReference type="ChEBI" id="CHEBI:137748"/>
        <dbReference type="EC" id="2.3.1.191"/>
    </reaction>
</comment>
<comment type="pathway">
    <text evidence="1">Bacterial outer membrane biogenesis; LPS lipid A biosynthesis.</text>
</comment>
<comment type="subunit">
    <text evidence="1">Homotrimer.</text>
</comment>
<comment type="similarity">
    <text evidence="1">Belongs to the transferase hexapeptide repeat family. LpxD subfamily.</text>
</comment>
<sequence length="361" mass="36796">MALTLEALAARFGGEIVGDGRCEVGALAPLDQAGPRQLAFLANPKYLAQVETTGAGAVLIAPGDLEKLGAAAHGRNFIVTPNPYAYFARVAQMFIDLAAPPRAAGVHPSATIDPAAQVAASAVIGPHVTVEAGAVIGERAQLDANVFVGRGTRIGDDSHLYPNVAIYHGCTLGPRAIVHSGAVIGSDGFGFAPDFVGEGDARTGAWVKIPQVGGVKVGPDVEIGANTTIDRGAMADTVIDECVKIDNLVQIGHNCRIGAYTVIAGCAGIAGSTTIGKHCMIGGAVGIAGHVTLGDYVIVTAKSGVSKSLPKAGIYTSAFPAVEHGDWNRSAALVRNLDKLRDRIKALETALVAREGDAGGA</sequence>
<dbReference type="EC" id="2.3.1.191" evidence="1"/>
<dbReference type="EMBL" id="CP000010">
    <property type="protein sequence ID" value="AAU47745.1"/>
    <property type="molecule type" value="Genomic_DNA"/>
</dbReference>
<dbReference type="RefSeq" id="WP_004191858.1">
    <property type="nucleotide sequence ID" value="NC_006348.1"/>
</dbReference>
<dbReference type="RefSeq" id="YP_103185.1">
    <property type="nucleotide sequence ID" value="NC_006348.1"/>
</dbReference>
<dbReference type="SMR" id="Q62JD4"/>
<dbReference type="GeneID" id="93060690"/>
<dbReference type="KEGG" id="bma:BMA1545"/>
<dbReference type="PATRIC" id="fig|243160.12.peg.1589"/>
<dbReference type="eggNOG" id="COG1044">
    <property type="taxonomic scope" value="Bacteria"/>
</dbReference>
<dbReference type="HOGENOM" id="CLU_049865_0_1_4"/>
<dbReference type="UniPathway" id="UPA00973"/>
<dbReference type="Proteomes" id="UP000006693">
    <property type="component" value="Chromosome 1"/>
</dbReference>
<dbReference type="GO" id="GO:0016020">
    <property type="term" value="C:membrane"/>
    <property type="evidence" value="ECO:0007669"/>
    <property type="project" value="GOC"/>
</dbReference>
<dbReference type="GO" id="GO:0016410">
    <property type="term" value="F:N-acyltransferase activity"/>
    <property type="evidence" value="ECO:0007669"/>
    <property type="project" value="InterPro"/>
</dbReference>
<dbReference type="GO" id="GO:0009245">
    <property type="term" value="P:lipid A biosynthetic process"/>
    <property type="evidence" value="ECO:0007669"/>
    <property type="project" value="UniProtKB-UniRule"/>
</dbReference>
<dbReference type="CDD" id="cd03352">
    <property type="entry name" value="LbH_LpxD"/>
    <property type="match status" value="1"/>
</dbReference>
<dbReference type="Gene3D" id="2.160.10.10">
    <property type="entry name" value="Hexapeptide repeat proteins"/>
    <property type="match status" value="1"/>
</dbReference>
<dbReference type="Gene3D" id="3.40.1390.10">
    <property type="entry name" value="MurE/MurF, N-terminal domain"/>
    <property type="match status" value="1"/>
</dbReference>
<dbReference type="HAMAP" id="MF_00523">
    <property type="entry name" value="LpxD"/>
    <property type="match status" value="1"/>
</dbReference>
<dbReference type="InterPro" id="IPR001451">
    <property type="entry name" value="Hexapep"/>
</dbReference>
<dbReference type="InterPro" id="IPR018357">
    <property type="entry name" value="Hexapep_transf_CS"/>
</dbReference>
<dbReference type="InterPro" id="IPR007691">
    <property type="entry name" value="LpxD"/>
</dbReference>
<dbReference type="InterPro" id="IPR011004">
    <property type="entry name" value="Trimer_LpxA-like_sf"/>
</dbReference>
<dbReference type="InterPro" id="IPR020573">
    <property type="entry name" value="UDP_GlcNAc_AcTrfase_non-rep"/>
</dbReference>
<dbReference type="NCBIfam" id="TIGR01853">
    <property type="entry name" value="lipid_A_lpxD"/>
    <property type="match status" value="1"/>
</dbReference>
<dbReference type="NCBIfam" id="NF002060">
    <property type="entry name" value="PRK00892.1"/>
    <property type="match status" value="1"/>
</dbReference>
<dbReference type="PANTHER" id="PTHR43378">
    <property type="entry name" value="UDP-3-O-ACYLGLUCOSAMINE N-ACYLTRANSFERASE"/>
    <property type="match status" value="1"/>
</dbReference>
<dbReference type="PANTHER" id="PTHR43378:SF2">
    <property type="entry name" value="UDP-3-O-ACYLGLUCOSAMINE N-ACYLTRANSFERASE 1, MITOCHONDRIAL-RELATED"/>
    <property type="match status" value="1"/>
</dbReference>
<dbReference type="Pfam" id="PF00132">
    <property type="entry name" value="Hexapep"/>
    <property type="match status" value="2"/>
</dbReference>
<dbReference type="Pfam" id="PF14602">
    <property type="entry name" value="Hexapep_2"/>
    <property type="match status" value="1"/>
</dbReference>
<dbReference type="Pfam" id="PF04613">
    <property type="entry name" value="LpxD"/>
    <property type="match status" value="1"/>
</dbReference>
<dbReference type="SUPFAM" id="SSF51161">
    <property type="entry name" value="Trimeric LpxA-like enzymes"/>
    <property type="match status" value="1"/>
</dbReference>
<dbReference type="PROSITE" id="PS00101">
    <property type="entry name" value="HEXAPEP_TRANSFERASES"/>
    <property type="match status" value="3"/>
</dbReference>
<reference key="1">
    <citation type="journal article" date="2004" name="Proc. Natl. Acad. Sci. U.S.A.">
        <title>Structural flexibility in the Burkholderia mallei genome.</title>
        <authorList>
            <person name="Nierman W.C."/>
            <person name="DeShazer D."/>
            <person name="Kim H.S."/>
            <person name="Tettelin H."/>
            <person name="Nelson K.E."/>
            <person name="Feldblyum T.V."/>
            <person name="Ulrich R.L."/>
            <person name="Ronning C.M."/>
            <person name="Brinkac L.M."/>
            <person name="Daugherty S.C."/>
            <person name="Davidsen T.D."/>
            <person name="DeBoy R.T."/>
            <person name="Dimitrov G."/>
            <person name="Dodson R.J."/>
            <person name="Durkin A.S."/>
            <person name="Gwinn M.L."/>
            <person name="Haft D.H."/>
            <person name="Khouri H.M."/>
            <person name="Kolonay J.F."/>
            <person name="Madupu R."/>
            <person name="Mohammoud Y."/>
            <person name="Nelson W.C."/>
            <person name="Radune D."/>
            <person name="Romero C.M."/>
            <person name="Sarria S."/>
            <person name="Selengut J."/>
            <person name="Shamblin C."/>
            <person name="Sullivan S.A."/>
            <person name="White O."/>
            <person name="Yu Y."/>
            <person name="Zafar N."/>
            <person name="Zhou L."/>
            <person name="Fraser C.M."/>
        </authorList>
    </citation>
    <scope>NUCLEOTIDE SEQUENCE [LARGE SCALE GENOMIC DNA]</scope>
    <source>
        <strain>ATCC 23344</strain>
    </source>
</reference>
<proteinExistence type="inferred from homology"/>
<name>LPXD_BURMA</name>
<organism>
    <name type="scientific">Burkholderia mallei (strain ATCC 23344)</name>
    <dbReference type="NCBI Taxonomy" id="243160"/>
    <lineage>
        <taxon>Bacteria</taxon>
        <taxon>Pseudomonadati</taxon>
        <taxon>Pseudomonadota</taxon>
        <taxon>Betaproteobacteria</taxon>
        <taxon>Burkholderiales</taxon>
        <taxon>Burkholderiaceae</taxon>
        <taxon>Burkholderia</taxon>
        <taxon>pseudomallei group</taxon>
    </lineage>
</organism>
<protein>
    <recommendedName>
        <fullName evidence="1">UDP-3-O-acylglucosamine N-acyltransferase</fullName>
        <ecNumber evidence="1">2.3.1.191</ecNumber>
    </recommendedName>
</protein>
<evidence type="ECO:0000255" key="1">
    <source>
        <dbReference type="HAMAP-Rule" id="MF_00523"/>
    </source>
</evidence>
<accession>Q62JD4</accession>
<keyword id="KW-0012">Acyltransferase</keyword>
<keyword id="KW-0441">Lipid A biosynthesis</keyword>
<keyword id="KW-0444">Lipid biosynthesis</keyword>
<keyword id="KW-0443">Lipid metabolism</keyword>
<keyword id="KW-1185">Reference proteome</keyword>
<keyword id="KW-0677">Repeat</keyword>
<keyword id="KW-0808">Transferase</keyword>
<gene>
    <name evidence="1" type="primary">lpxD</name>
    <name type="ordered locus">BMA1545</name>
</gene>